<comment type="function">
    <text evidence="1">One of the primary rRNA binding proteins, it binds directly to 16S rRNA central domain where it helps coordinate assembly of the platform of the 30S subunit.</text>
</comment>
<comment type="subunit">
    <text evidence="1">Part of the 30S ribosomal subunit. Contacts proteins S5 and S12.</text>
</comment>
<comment type="similarity">
    <text evidence="1">Belongs to the universal ribosomal protein uS8 family.</text>
</comment>
<sequence length="131" mass="14199">MSMSDPIADMLTRIRNAQMVEKVSVSMPSSKVKVAIAQVLKDEGYIDDFAVKADGAKAELNIALKYYAGRPVIERLERVSKPGLRVYRGRNEIPQVMNGLGVAIVSTPKGVMTDRKARATGVGGEVICYVA</sequence>
<name>RS8_BURTA</name>
<feature type="chain" id="PRO_0000290814" description="Small ribosomal subunit protein uS8">
    <location>
        <begin position="1"/>
        <end position="131"/>
    </location>
</feature>
<proteinExistence type="inferred from homology"/>
<reference key="1">
    <citation type="journal article" date="2005" name="BMC Genomics">
        <title>Bacterial genome adaptation to niches: divergence of the potential virulence genes in three Burkholderia species of different survival strategies.</title>
        <authorList>
            <person name="Kim H.S."/>
            <person name="Schell M.A."/>
            <person name="Yu Y."/>
            <person name="Ulrich R.L."/>
            <person name="Sarria S.H."/>
            <person name="Nierman W.C."/>
            <person name="DeShazer D."/>
        </authorList>
    </citation>
    <scope>NUCLEOTIDE SEQUENCE [LARGE SCALE GENOMIC DNA]</scope>
    <source>
        <strain>ATCC 700388 / DSM 13276 / CCUG 48851 / CIP 106301 / E264</strain>
    </source>
</reference>
<protein>
    <recommendedName>
        <fullName evidence="1">Small ribosomal subunit protein uS8</fullName>
    </recommendedName>
    <alternativeName>
        <fullName evidence="2">30S ribosomal protein S8</fullName>
    </alternativeName>
</protein>
<dbReference type="EMBL" id="CP000086">
    <property type="protein sequence ID" value="ABC36424.1"/>
    <property type="molecule type" value="Genomic_DNA"/>
</dbReference>
<dbReference type="RefSeq" id="WP_004185153.1">
    <property type="nucleotide sequence ID" value="NZ_CP008786.1"/>
</dbReference>
<dbReference type="SMR" id="Q2SU41"/>
<dbReference type="GeneID" id="93061818"/>
<dbReference type="KEGG" id="bte:BTH_I3054"/>
<dbReference type="HOGENOM" id="CLU_098428_0_0_4"/>
<dbReference type="Proteomes" id="UP000001930">
    <property type="component" value="Chromosome I"/>
</dbReference>
<dbReference type="GO" id="GO:1990904">
    <property type="term" value="C:ribonucleoprotein complex"/>
    <property type="evidence" value="ECO:0007669"/>
    <property type="project" value="UniProtKB-KW"/>
</dbReference>
<dbReference type="GO" id="GO:0005840">
    <property type="term" value="C:ribosome"/>
    <property type="evidence" value="ECO:0007669"/>
    <property type="project" value="UniProtKB-KW"/>
</dbReference>
<dbReference type="GO" id="GO:0019843">
    <property type="term" value="F:rRNA binding"/>
    <property type="evidence" value="ECO:0007669"/>
    <property type="project" value="UniProtKB-UniRule"/>
</dbReference>
<dbReference type="GO" id="GO:0003735">
    <property type="term" value="F:structural constituent of ribosome"/>
    <property type="evidence" value="ECO:0007669"/>
    <property type="project" value="InterPro"/>
</dbReference>
<dbReference type="GO" id="GO:0006412">
    <property type="term" value="P:translation"/>
    <property type="evidence" value="ECO:0007669"/>
    <property type="project" value="UniProtKB-UniRule"/>
</dbReference>
<dbReference type="FunFam" id="3.30.1370.30:FF:000003">
    <property type="entry name" value="30S ribosomal protein S8"/>
    <property type="match status" value="1"/>
</dbReference>
<dbReference type="FunFam" id="3.30.1490.10:FF:000001">
    <property type="entry name" value="30S ribosomal protein S8"/>
    <property type="match status" value="1"/>
</dbReference>
<dbReference type="Gene3D" id="3.30.1370.30">
    <property type="match status" value="1"/>
</dbReference>
<dbReference type="Gene3D" id="3.30.1490.10">
    <property type="match status" value="1"/>
</dbReference>
<dbReference type="HAMAP" id="MF_01302_B">
    <property type="entry name" value="Ribosomal_uS8_B"/>
    <property type="match status" value="1"/>
</dbReference>
<dbReference type="InterPro" id="IPR000630">
    <property type="entry name" value="Ribosomal_uS8"/>
</dbReference>
<dbReference type="InterPro" id="IPR047863">
    <property type="entry name" value="Ribosomal_uS8_CS"/>
</dbReference>
<dbReference type="InterPro" id="IPR035987">
    <property type="entry name" value="Ribosomal_uS8_sf"/>
</dbReference>
<dbReference type="NCBIfam" id="NF001109">
    <property type="entry name" value="PRK00136.1"/>
    <property type="match status" value="1"/>
</dbReference>
<dbReference type="PANTHER" id="PTHR11758">
    <property type="entry name" value="40S RIBOSOMAL PROTEIN S15A"/>
    <property type="match status" value="1"/>
</dbReference>
<dbReference type="Pfam" id="PF00410">
    <property type="entry name" value="Ribosomal_S8"/>
    <property type="match status" value="1"/>
</dbReference>
<dbReference type="SUPFAM" id="SSF56047">
    <property type="entry name" value="Ribosomal protein S8"/>
    <property type="match status" value="1"/>
</dbReference>
<dbReference type="PROSITE" id="PS00053">
    <property type="entry name" value="RIBOSOMAL_S8"/>
    <property type="match status" value="1"/>
</dbReference>
<keyword id="KW-0687">Ribonucleoprotein</keyword>
<keyword id="KW-0689">Ribosomal protein</keyword>
<keyword id="KW-0694">RNA-binding</keyword>
<keyword id="KW-0699">rRNA-binding</keyword>
<accession>Q2SU41</accession>
<organism>
    <name type="scientific">Burkholderia thailandensis (strain ATCC 700388 / DSM 13276 / CCUG 48851 / CIP 106301 / E264)</name>
    <dbReference type="NCBI Taxonomy" id="271848"/>
    <lineage>
        <taxon>Bacteria</taxon>
        <taxon>Pseudomonadati</taxon>
        <taxon>Pseudomonadota</taxon>
        <taxon>Betaproteobacteria</taxon>
        <taxon>Burkholderiales</taxon>
        <taxon>Burkholderiaceae</taxon>
        <taxon>Burkholderia</taxon>
        <taxon>pseudomallei group</taxon>
    </lineage>
</organism>
<gene>
    <name evidence="1" type="primary">rpsH</name>
    <name type="ordered locus">BTH_I3054</name>
</gene>
<evidence type="ECO:0000255" key="1">
    <source>
        <dbReference type="HAMAP-Rule" id="MF_01302"/>
    </source>
</evidence>
<evidence type="ECO:0000305" key="2"/>